<name>COBH_MYCTO</name>
<feature type="chain" id="PRO_0000426995" description="Precorrin-8X methylmutase">
    <location>
        <begin position="1"/>
        <end position="208"/>
    </location>
</feature>
<feature type="active site" description="Proton donor/acceptor" evidence="1">
    <location>
        <position position="41"/>
    </location>
</feature>
<feature type="binding site" evidence="1">
    <location>
        <position position="15"/>
    </location>
    <ligand>
        <name>substrate</name>
    </ligand>
</feature>
<feature type="binding site" evidence="1">
    <location>
        <position position="38"/>
    </location>
    <ligand>
        <name>substrate</name>
    </ligand>
</feature>
<reference key="1">
    <citation type="journal article" date="2002" name="J. Bacteriol.">
        <title>Whole-genome comparison of Mycobacterium tuberculosis clinical and laboratory strains.</title>
        <authorList>
            <person name="Fleischmann R.D."/>
            <person name="Alland D."/>
            <person name="Eisen J.A."/>
            <person name="Carpenter L."/>
            <person name="White O."/>
            <person name="Peterson J.D."/>
            <person name="DeBoy R.T."/>
            <person name="Dodson R.J."/>
            <person name="Gwinn M.L."/>
            <person name="Haft D.H."/>
            <person name="Hickey E.K."/>
            <person name="Kolonay J.F."/>
            <person name="Nelson W.C."/>
            <person name="Umayam L.A."/>
            <person name="Ermolaeva M.D."/>
            <person name="Salzberg S.L."/>
            <person name="Delcher A."/>
            <person name="Utterback T.R."/>
            <person name="Weidman J.F."/>
            <person name="Khouri H.M."/>
            <person name="Gill J."/>
            <person name="Mikula A."/>
            <person name="Bishai W."/>
            <person name="Jacobs W.R. Jr."/>
            <person name="Venter J.C."/>
            <person name="Fraser C.M."/>
        </authorList>
    </citation>
    <scope>NUCLEOTIDE SEQUENCE [LARGE SCALE GENOMIC DNA]</scope>
    <source>
        <strain>CDC 1551 / Oshkosh</strain>
    </source>
</reference>
<dbReference type="EC" id="5.4.99.61"/>
<dbReference type="EMBL" id="AE000516">
    <property type="protein sequence ID" value="AAK46405.1"/>
    <property type="molecule type" value="Genomic_DNA"/>
</dbReference>
<dbReference type="PIR" id="D70764">
    <property type="entry name" value="D70764"/>
</dbReference>
<dbReference type="RefSeq" id="WP_003410658.1">
    <property type="nucleotide sequence ID" value="NZ_KK341227.1"/>
</dbReference>
<dbReference type="SMR" id="P9WP86"/>
<dbReference type="KEGG" id="mtc:MT2125"/>
<dbReference type="PATRIC" id="fig|83331.31.peg.2293"/>
<dbReference type="HOGENOM" id="CLU_084703_0_0_11"/>
<dbReference type="UniPathway" id="UPA00148">
    <property type="reaction ID" value="UER00219"/>
</dbReference>
<dbReference type="Proteomes" id="UP000001020">
    <property type="component" value="Chromosome"/>
</dbReference>
<dbReference type="GO" id="GO:0016993">
    <property type="term" value="F:precorrin-8X methylmutase activity"/>
    <property type="evidence" value="ECO:0007669"/>
    <property type="project" value="UniProtKB-EC"/>
</dbReference>
<dbReference type="GO" id="GO:0009236">
    <property type="term" value="P:cobalamin biosynthetic process"/>
    <property type="evidence" value="ECO:0007669"/>
    <property type="project" value="UniProtKB-UniPathway"/>
</dbReference>
<dbReference type="Gene3D" id="3.40.50.10230">
    <property type="entry name" value="Cobalamin biosynthesis CobH/CbiC, precorrin-8X methylmutase"/>
    <property type="match status" value="1"/>
</dbReference>
<dbReference type="InterPro" id="IPR003722">
    <property type="entry name" value="Cbl_synth_CobH/CbiC"/>
</dbReference>
<dbReference type="InterPro" id="IPR036588">
    <property type="entry name" value="CobH/CbiC_sf"/>
</dbReference>
<dbReference type="NCBIfam" id="NF006136">
    <property type="entry name" value="PRK08285.1"/>
    <property type="match status" value="1"/>
</dbReference>
<dbReference type="PANTHER" id="PTHR43588">
    <property type="entry name" value="COBALT-PRECORRIN-8 METHYLMUTASE"/>
    <property type="match status" value="1"/>
</dbReference>
<dbReference type="PANTHER" id="PTHR43588:SF1">
    <property type="entry name" value="COBALT-PRECORRIN-8 METHYLMUTASE"/>
    <property type="match status" value="1"/>
</dbReference>
<dbReference type="Pfam" id="PF02570">
    <property type="entry name" value="CbiC"/>
    <property type="match status" value="1"/>
</dbReference>
<dbReference type="SUPFAM" id="SSF63965">
    <property type="entry name" value="Precorrin-8X methylmutase CbiC/CobH"/>
    <property type="match status" value="1"/>
</dbReference>
<proteinExistence type="inferred from homology"/>
<keyword id="KW-0169">Cobalamin biosynthesis</keyword>
<keyword id="KW-0413">Isomerase</keyword>
<keyword id="KW-1185">Reference proteome</keyword>
<sequence length="208" mass="21614">MLDYLRDAAEIYRRSFAVIRAEADLARFPADVARVVVRLIHTCGQVDVAEHVAYTDDVVARAGAALAAGAPVLCDSSMVAAGITTSRLPADNQIVSLVADPRATELAARRQTTRSAAGVELCAERLPGAVLAIGNAPTALFRLLELVDEGAPPPAAVLGGPVGFVGSAQAKEELIERPRGMSYLVVRGRRGGSAMAAAAVNAIASDRE</sequence>
<evidence type="ECO:0000250" key="1"/>
<evidence type="ECO:0000305" key="2"/>
<accession>P9WP86</accession>
<accession>L0TBD9</accession>
<accession>P63839</accession>
<accession>Q10676</accession>
<comment type="function">
    <text evidence="1">Catalyzes the conversion of precorrin-8X to hydrogenobyrinate.</text>
</comment>
<comment type="catalytic activity">
    <reaction>
        <text>precorrin-8X + 3 H(+) = hydrogenobyrinate</text>
        <dbReference type="Rhea" id="RHEA:22512"/>
        <dbReference type="ChEBI" id="CHEBI:15378"/>
        <dbReference type="ChEBI" id="CHEBI:58581"/>
        <dbReference type="ChEBI" id="CHEBI:77873"/>
        <dbReference type="EC" id="5.4.99.61"/>
    </reaction>
</comment>
<comment type="pathway">
    <text>Cofactor biosynthesis; adenosylcobalamin biosynthesis; cob(II)yrinate a,c-diamide from precorrin-2 (aerobic route): step 8/10.</text>
</comment>
<comment type="similarity">
    <text evidence="2">Belongs to the CobH/CbiC family.</text>
</comment>
<gene>
    <name type="primary">cobH</name>
    <name type="ordered locus">MT2125</name>
</gene>
<organism>
    <name type="scientific">Mycobacterium tuberculosis (strain CDC 1551 / Oshkosh)</name>
    <dbReference type="NCBI Taxonomy" id="83331"/>
    <lineage>
        <taxon>Bacteria</taxon>
        <taxon>Bacillati</taxon>
        <taxon>Actinomycetota</taxon>
        <taxon>Actinomycetes</taxon>
        <taxon>Mycobacteriales</taxon>
        <taxon>Mycobacteriaceae</taxon>
        <taxon>Mycobacterium</taxon>
        <taxon>Mycobacterium tuberculosis complex</taxon>
    </lineage>
</organism>
<protein>
    <recommendedName>
        <fullName>Precorrin-8X methylmutase</fullName>
        <ecNumber>5.4.99.61</ecNumber>
    </recommendedName>
    <alternativeName>
        <fullName>HBA synthase</fullName>
    </alternativeName>
    <alternativeName>
        <fullName>Precorrin isomerase</fullName>
    </alternativeName>
</protein>